<keyword id="KW-0326">Glycosidase</keyword>
<keyword id="KW-0378">Hydrolase</keyword>
<keyword id="KW-1185">Reference proteome</keyword>
<proteinExistence type="evidence at protein level"/>
<sequence>MRIGNLNVEIEFIADNIVRVLYYYGREAIVDNSLVVLPNLEKLSIKGESTGPSIISFSSESLSVDINTSNGELIMKDNKGGIVVKEKRRDLKFNEELSTYNVEQEFELSEGERVYGLGQHAGGNGLGQSSAYKLDYSGLSTTLSQRNTDIGIPFIVSSKGYGILWDNYSLGSISLRRNKLKVWFEAGKKIDYYVIYGDSIDDVIKGYRKLTGDAPLLPKWAYGYWQSKERYKSQDEITSVVKEFRERKIPLDVIVLDWRYWGKYGWNAFKFDETDFPRPKDMVEEIHKMGAKLAISIWPTFGKETEVFKDMESKGCIILGTTAFNPFKDECRELFWSYVKGFYDLGIDAYWLDASEPETGLGLVFFSPIHDVDLEIGKGYEYLNAYPLMETKAVYEGQRRISNKRVVILTRSAFAGQQRHSAISWSGDVLGDWATLRAQIPAGLNFSISGIPYWTTDTGGFFSGNPETKAYAEIFVRWFQWSTFCPILRVHGTIFPKEPWRFPREYQEVILKYIRLRYKLLPYIYSLAWMTYSIGYTIMRPLVMDFRDDQNVYDFDEQYMFGPYILISPVTLPSIIEKEVYLPSKEYWYDFWTGEKLEGGRMMDVKVTLDTIPLFVRSGAVLPLLGKNVNNAEEYWDVIDLRVYPGKNGYFELYDDDGITYEYEKGKYYIIPITWDEDKQELTIGKKRGELEMSKKIIKIIWVEKGKGIEHTKPDVEIEYNGKETITVKRG</sequence>
<protein>
    <recommendedName>
        <fullName>Alpha-xylosidase</fullName>
        <ecNumber>3.2.1.177</ecNumber>
    </recommendedName>
</protein>
<gene>
    <name type="primary">xylS</name>
    <name type="ordered locus">SSO3022</name>
</gene>
<name>XYLS_SACS2</name>
<dbReference type="EC" id="3.2.1.177"/>
<dbReference type="EMBL" id="AJ251975">
    <property type="protein sequence ID" value="CAB99206.1"/>
    <property type="molecule type" value="Genomic_DNA"/>
</dbReference>
<dbReference type="EMBL" id="AE006641">
    <property type="protein sequence ID" value="AAK43123.1"/>
    <property type="molecule type" value="Genomic_DNA"/>
</dbReference>
<dbReference type="PIR" id="D90483">
    <property type="entry name" value="D90483"/>
</dbReference>
<dbReference type="RefSeq" id="WP_009992679.1">
    <property type="nucleotide sequence ID" value="NC_002754.1"/>
</dbReference>
<dbReference type="SMR" id="Q9P999"/>
<dbReference type="STRING" id="273057.SSO3022"/>
<dbReference type="CAZy" id="GH31">
    <property type="family name" value="Glycoside Hydrolase Family 31"/>
</dbReference>
<dbReference type="PaxDb" id="273057-SSO3022"/>
<dbReference type="DNASU" id="1453042"/>
<dbReference type="EnsemblBacteria" id="AAK43123">
    <property type="protein sequence ID" value="AAK43123"/>
    <property type="gene ID" value="SSO3022"/>
</dbReference>
<dbReference type="GeneID" id="44128744"/>
<dbReference type="KEGG" id="sso:SSO3022"/>
<dbReference type="PATRIC" id="fig|273057.12.peg.3115"/>
<dbReference type="eggNOG" id="arCOG03663">
    <property type="taxonomic scope" value="Archaea"/>
</dbReference>
<dbReference type="HOGENOM" id="CLU_000631_7_3_2"/>
<dbReference type="InParanoid" id="Q9P999"/>
<dbReference type="PhylomeDB" id="Q9P999"/>
<dbReference type="BioCyc" id="MetaCyc:MONOMER-16613"/>
<dbReference type="BRENDA" id="3.2.1.177">
    <property type="organism ID" value="6163"/>
</dbReference>
<dbReference type="SABIO-RK" id="Q9P999"/>
<dbReference type="Proteomes" id="UP000001974">
    <property type="component" value="Chromosome"/>
</dbReference>
<dbReference type="GO" id="GO:0061634">
    <property type="term" value="F:alpha-D-xyloside xylohydrolase"/>
    <property type="evidence" value="ECO:0007669"/>
    <property type="project" value="UniProtKB-EC"/>
</dbReference>
<dbReference type="GO" id="GO:0030246">
    <property type="term" value="F:carbohydrate binding"/>
    <property type="evidence" value="ECO:0007669"/>
    <property type="project" value="InterPro"/>
</dbReference>
<dbReference type="GO" id="GO:0005975">
    <property type="term" value="P:carbohydrate metabolic process"/>
    <property type="evidence" value="ECO:0007669"/>
    <property type="project" value="InterPro"/>
</dbReference>
<dbReference type="CDD" id="cd14752">
    <property type="entry name" value="GH31_N"/>
    <property type="match status" value="1"/>
</dbReference>
<dbReference type="CDD" id="cd06591">
    <property type="entry name" value="GH31_xylosidase_XylS"/>
    <property type="match status" value="1"/>
</dbReference>
<dbReference type="Gene3D" id="3.20.20.80">
    <property type="entry name" value="Glycosidases"/>
    <property type="match status" value="1"/>
</dbReference>
<dbReference type="Gene3D" id="2.60.40.1760">
    <property type="entry name" value="glycosyl hydrolase (family 31)"/>
    <property type="match status" value="1"/>
</dbReference>
<dbReference type="Gene3D" id="2.60.40.1180">
    <property type="entry name" value="Golgi alpha-mannosidase II"/>
    <property type="match status" value="2"/>
</dbReference>
<dbReference type="InterPro" id="IPR033403">
    <property type="entry name" value="DUF5110"/>
</dbReference>
<dbReference type="InterPro" id="IPR011013">
    <property type="entry name" value="Gal_mutarotase_sf_dom"/>
</dbReference>
<dbReference type="InterPro" id="IPR048395">
    <property type="entry name" value="Glyco_hydro_31_C"/>
</dbReference>
<dbReference type="InterPro" id="IPR025887">
    <property type="entry name" value="Glyco_hydro_31_N_dom"/>
</dbReference>
<dbReference type="InterPro" id="IPR000322">
    <property type="entry name" value="Glyco_hydro_31_TIM"/>
</dbReference>
<dbReference type="InterPro" id="IPR013780">
    <property type="entry name" value="Glyco_hydro_b"/>
</dbReference>
<dbReference type="InterPro" id="IPR017853">
    <property type="entry name" value="Glycoside_hydrolase_SF"/>
</dbReference>
<dbReference type="InterPro" id="IPR051816">
    <property type="entry name" value="Glycosyl_Hydrolase_31"/>
</dbReference>
<dbReference type="PANTHER" id="PTHR43863">
    <property type="entry name" value="HYDROLASE, PUTATIVE (AFU_ORTHOLOGUE AFUA_1G03140)-RELATED"/>
    <property type="match status" value="1"/>
</dbReference>
<dbReference type="PANTHER" id="PTHR43863:SF2">
    <property type="entry name" value="MALTASE-GLUCOAMYLASE"/>
    <property type="match status" value="1"/>
</dbReference>
<dbReference type="Pfam" id="PF17137">
    <property type="entry name" value="DUF5110"/>
    <property type="match status" value="1"/>
</dbReference>
<dbReference type="Pfam" id="PF13802">
    <property type="entry name" value="Gal_mutarotas_2"/>
    <property type="match status" value="1"/>
</dbReference>
<dbReference type="Pfam" id="PF01055">
    <property type="entry name" value="Glyco_hydro_31_2nd"/>
    <property type="match status" value="1"/>
</dbReference>
<dbReference type="Pfam" id="PF21365">
    <property type="entry name" value="Glyco_hydro_31_3rd"/>
    <property type="match status" value="1"/>
</dbReference>
<dbReference type="SUPFAM" id="SSF51445">
    <property type="entry name" value="(Trans)glycosidases"/>
    <property type="match status" value="1"/>
</dbReference>
<dbReference type="SUPFAM" id="SSF74650">
    <property type="entry name" value="Galactose mutarotase-like"/>
    <property type="match status" value="1"/>
</dbReference>
<dbReference type="SUPFAM" id="SSF51011">
    <property type="entry name" value="Glycosyl hydrolase domain"/>
    <property type="match status" value="1"/>
</dbReference>
<accession>Q9P999</accession>
<feature type="chain" id="PRO_0000185369" description="Alpha-xylosidase">
    <location>
        <begin position="1"/>
        <end position="731"/>
    </location>
</feature>
<feature type="active site" evidence="1">
    <location>
        <position position="353"/>
    </location>
</feature>
<feature type="active site" evidence="1">
    <location>
        <position position="356"/>
    </location>
</feature>
<feature type="active site" description="Proton donor" evidence="1">
    <location>
        <position position="428"/>
    </location>
</feature>
<comment type="function">
    <text>Catalyzes the liberation of alpha-xylose from the non-reducing terminal glucose of xyloglucan oligosaccharides. Has high hydrolytic activity on the disaccharide isoprimeverose. Follows a retaining mechanism of substrate hydrolysis.</text>
</comment>
<comment type="catalytic activity">
    <reaction evidence="2">
        <text>Hydrolysis of terminal, non-reducing alpha-D-xylose residues with release of alpha-D-xylose.</text>
        <dbReference type="EC" id="3.2.1.177"/>
    </reaction>
</comment>
<comment type="biophysicochemical properties">
    <kinetics>
        <KM evidence="2">17 mM for maltose</KM>
        <KM evidence="2">3.45 mM for maltotriose</KM>
        <KM evidence="2">28.9 mM for isoprimeverose</KM>
        <KM evidence="2">1.72 mM for 4-nitrophenyl-beta-isoprimeveroside</KM>
    </kinetics>
    <phDependence>
        <text evidence="2">Optimum pH is 5.5.</text>
    </phDependence>
    <temperatureDependence>
        <text evidence="2">Optimum temperature is 90 degrees Celsius.</text>
    </temperatureDependence>
</comment>
<comment type="subunit">
    <text evidence="2">Monomer.</text>
</comment>
<comment type="similarity">
    <text evidence="3">Belongs to the glycosyl hydrolase 31 family.</text>
</comment>
<evidence type="ECO:0000250" key="1"/>
<evidence type="ECO:0000269" key="2">
    <source>
    </source>
</evidence>
<evidence type="ECO:0000305" key="3"/>
<reference key="1">
    <citation type="journal article" date="2000" name="J. Biol. Chem.">
        <title>Identification and molecular characterization of the first alpha-xylosidase from an Archaeon.</title>
        <authorList>
            <person name="Moracci M."/>
            <person name="Ponzano B.C."/>
            <person name="Trincone A."/>
            <person name="Fusco S."/>
            <person name="De Rosa M."/>
            <person name="van der Oost J."/>
            <person name="Sensen C.W."/>
            <person name="Charlebois R.L."/>
            <person name="Rossi M."/>
        </authorList>
    </citation>
    <scope>NUCLEOTIDE SEQUENCE [GENOMIC DNA]</scope>
    <scope>CATALYTIC ACTIVITY</scope>
    <scope>SUBUNIT</scope>
    <scope>SUBSTRATE SPECIFICITY</scope>
    <scope>BIOPHYSICOCHEMICAL PROPERTIES</scope>
    <source>
        <strain>ATCC 35092 / DSM 1617 / JCM 11322 / P2</strain>
        <strain>DSM 5833 / MT-4</strain>
    </source>
</reference>
<reference key="2">
    <citation type="journal article" date="2001" name="Proc. Natl. Acad. Sci. U.S.A.">
        <title>The complete genome of the crenarchaeon Sulfolobus solfataricus P2.</title>
        <authorList>
            <person name="She Q."/>
            <person name="Singh R.K."/>
            <person name="Confalonieri F."/>
            <person name="Zivanovic Y."/>
            <person name="Allard G."/>
            <person name="Awayez M.J."/>
            <person name="Chan-Weiher C.C.-Y."/>
            <person name="Clausen I.G."/>
            <person name="Curtis B.A."/>
            <person name="De Moors A."/>
            <person name="Erauso G."/>
            <person name="Fletcher C."/>
            <person name="Gordon P.M.K."/>
            <person name="Heikamp-de Jong I."/>
            <person name="Jeffries A.C."/>
            <person name="Kozera C.J."/>
            <person name="Medina N."/>
            <person name="Peng X."/>
            <person name="Thi-Ngoc H.P."/>
            <person name="Redder P."/>
            <person name="Schenk M.E."/>
            <person name="Theriault C."/>
            <person name="Tolstrup N."/>
            <person name="Charlebois R.L."/>
            <person name="Doolittle W.F."/>
            <person name="Duguet M."/>
            <person name="Gaasterland T."/>
            <person name="Garrett R.A."/>
            <person name="Ragan M.A."/>
            <person name="Sensen C.W."/>
            <person name="Van der Oost J."/>
        </authorList>
    </citation>
    <scope>NUCLEOTIDE SEQUENCE [LARGE SCALE GENOMIC DNA]</scope>
    <source>
        <strain>ATCC 35092 / DSM 1617 / JCM 11322 / P2</strain>
    </source>
</reference>
<organism>
    <name type="scientific">Saccharolobus solfataricus (strain ATCC 35092 / DSM 1617 / JCM 11322 / P2)</name>
    <name type="common">Sulfolobus solfataricus</name>
    <dbReference type="NCBI Taxonomy" id="273057"/>
    <lineage>
        <taxon>Archaea</taxon>
        <taxon>Thermoproteota</taxon>
        <taxon>Thermoprotei</taxon>
        <taxon>Sulfolobales</taxon>
        <taxon>Sulfolobaceae</taxon>
        <taxon>Saccharolobus</taxon>
    </lineage>
</organism>